<evidence type="ECO:0000255" key="1">
    <source>
        <dbReference type="HAMAP-Rule" id="MF_01527"/>
    </source>
</evidence>
<dbReference type="EC" id="3.5.4.16" evidence="1"/>
<dbReference type="EMBL" id="CP001026">
    <property type="protein sequence ID" value="ACB66244.1"/>
    <property type="molecule type" value="Genomic_DNA"/>
</dbReference>
<dbReference type="RefSeq" id="WP_012365633.1">
    <property type="nucleotide sequence ID" value="NC_010552.1"/>
</dbReference>
<dbReference type="SMR" id="B1Z1G3"/>
<dbReference type="KEGG" id="bac:BamMC406_3777"/>
<dbReference type="HOGENOM" id="CLU_062816_1_1_4"/>
<dbReference type="OrthoDB" id="9774824at2"/>
<dbReference type="UniPathway" id="UPA00848">
    <property type="reaction ID" value="UER00151"/>
</dbReference>
<dbReference type="Proteomes" id="UP000001680">
    <property type="component" value="Chromosome 2"/>
</dbReference>
<dbReference type="GO" id="GO:0003934">
    <property type="term" value="F:GTP cyclohydrolase I activity"/>
    <property type="evidence" value="ECO:0007669"/>
    <property type="project" value="UniProtKB-UniRule"/>
</dbReference>
<dbReference type="GO" id="GO:0046654">
    <property type="term" value="P:tetrahydrofolate biosynthetic process"/>
    <property type="evidence" value="ECO:0007669"/>
    <property type="project" value="UniProtKB-UniRule"/>
</dbReference>
<dbReference type="Gene3D" id="3.10.270.10">
    <property type="entry name" value="Urate Oxidase"/>
    <property type="match status" value="1"/>
</dbReference>
<dbReference type="HAMAP" id="MF_01527_B">
    <property type="entry name" value="GTP_cyclohydrol_B"/>
    <property type="match status" value="1"/>
</dbReference>
<dbReference type="InterPro" id="IPR022838">
    <property type="entry name" value="GTP_cyclohydrolase_FolE2"/>
</dbReference>
<dbReference type="InterPro" id="IPR003801">
    <property type="entry name" value="GTP_cyclohydrolase_FolE2/MptA"/>
</dbReference>
<dbReference type="NCBIfam" id="NF010200">
    <property type="entry name" value="PRK13674.1-1"/>
    <property type="match status" value="1"/>
</dbReference>
<dbReference type="PANTHER" id="PTHR36445">
    <property type="entry name" value="GTP CYCLOHYDROLASE MPTA"/>
    <property type="match status" value="1"/>
</dbReference>
<dbReference type="PANTHER" id="PTHR36445:SF1">
    <property type="entry name" value="GTP CYCLOHYDROLASE MPTA"/>
    <property type="match status" value="1"/>
</dbReference>
<dbReference type="Pfam" id="PF02649">
    <property type="entry name" value="GCHY-1"/>
    <property type="match status" value="1"/>
</dbReference>
<protein>
    <recommendedName>
        <fullName evidence="1">GTP cyclohydrolase FolE2</fullName>
        <ecNumber evidence="1">3.5.4.16</ecNumber>
    </recommendedName>
</protein>
<gene>
    <name evidence="1" type="primary">folE2</name>
    <name type="ordered locus">BamMC406_3777</name>
</gene>
<reference key="1">
    <citation type="submission" date="2008-04" db="EMBL/GenBank/DDBJ databases">
        <title>Complete sequence of chromosome 2 of Burkholderia ambifaria MC40-6.</title>
        <authorList>
            <person name="Copeland A."/>
            <person name="Lucas S."/>
            <person name="Lapidus A."/>
            <person name="Glavina del Rio T."/>
            <person name="Dalin E."/>
            <person name="Tice H."/>
            <person name="Pitluck S."/>
            <person name="Chain P."/>
            <person name="Malfatti S."/>
            <person name="Shin M."/>
            <person name="Vergez L."/>
            <person name="Lang D."/>
            <person name="Schmutz J."/>
            <person name="Larimer F."/>
            <person name="Land M."/>
            <person name="Hauser L."/>
            <person name="Kyrpides N."/>
            <person name="Lykidis A."/>
            <person name="Ramette A."/>
            <person name="Konstantinidis K."/>
            <person name="Tiedje J."/>
            <person name="Richardson P."/>
        </authorList>
    </citation>
    <scope>NUCLEOTIDE SEQUENCE [LARGE SCALE GENOMIC DNA]</scope>
    <source>
        <strain>MC40-6</strain>
    </source>
</reference>
<organism>
    <name type="scientific">Burkholderia ambifaria (strain MC40-6)</name>
    <dbReference type="NCBI Taxonomy" id="398577"/>
    <lineage>
        <taxon>Bacteria</taxon>
        <taxon>Pseudomonadati</taxon>
        <taxon>Pseudomonadota</taxon>
        <taxon>Betaproteobacteria</taxon>
        <taxon>Burkholderiales</taxon>
        <taxon>Burkholderiaceae</taxon>
        <taxon>Burkholderia</taxon>
        <taxon>Burkholderia cepacia complex</taxon>
    </lineage>
</organism>
<name>GCH4_BURA4</name>
<sequence>MNQMNPAFVMPDVQSTVDTRQIPIQRVGVKAVRHPLTVRTESGDVQPTVGVWNLDVHLPADQKGTHMSRFVALLEESREPLTVERFRAMLASMLVRLEAEAGRIEVTFPYFVNKTAPVSGVQSLLDYEVTLAGESRNGETRLFLKVLVPVTSLCPCSKKISQYGAHNQRSHVTIDAELAADLPVEALIRIAEEEASCELWGLLKRPDEKFVTERAYENPKFVEDLVRDVAQRLDADERVVAYVLEAENFESIHNHSAYALIERDKRHAA</sequence>
<accession>B1Z1G3</accession>
<comment type="function">
    <text evidence="1">Converts GTP to 7,8-dihydroneopterin triphosphate.</text>
</comment>
<comment type="catalytic activity">
    <reaction evidence="1">
        <text>GTP + H2O = 7,8-dihydroneopterin 3'-triphosphate + formate + H(+)</text>
        <dbReference type="Rhea" id="RHEA:17473"/>
        <dbReference type="ChEBI" id="CHEBI:15377"/>
        <dbReference type="ChEBI" id="CHEBI:15378"/>
        <dbReference type="ChEBI" id="CHEBI:15740"/>
        <dbReference type="ChEBI" id="CHEBI:37565"/>
        <dbReference type="ChEBI" id="CHEBI:58462"/>
        <dbReference type="EC" id="3.5.4.16"/>
    </reaction>
</comment>
<comment type="pathway">
    <text evidence="1">Cofactor biosynthesis; 7,8-dihydroneopterin triphosphate biosynthesis; 7,8-dihydroneopterin triphosphate from GTP: step 1/1.</text>
</comment>
<comment type="similarity">
    <text evidence="1">Belongs to the GTP cyclohydrolase IV family.</text>
</comment>
<feature type="chain" id="PRO_0000372021" description="GTP cyclohydrolase FolE2">
    <location>
        <begin position="1"/>
        <end position="269"/>
    </location>
</feature>
<feature type="site" description="May be catalytically important" evidence="1">
    <location>
        <position position="154"/>
    </location>
</feature>
<proteinExistence type="inferred from homology"/>
<keyword id="KW-0378">Hydrolase</keyword>